<name>CRH2_CAEEL</name>
<evidence type="ECO:0000250" key="1">
    <source>
        <dbReference type="UniProtKB" id="Q96BA8"/>
    </source>
</evidence>
<evidence type="ECO:0000255" key="2">
    <source>
        <dbReference type="PROSITE-ProRule" id="PRU00978"/>
    </source>
</evidence>
<evidence type="ECO:0000256" key="3">
    <source>
        <dbReference type="SAM" id="MobiDB-lite"/>
    </source>
</evidence>
<evidence type="ECO:0000269" key="4">
    <source>
    </source>
</evidence>
<evidence type="ECO:0000305" key="5"/>
<evidence type="ECO:0000312" key="6">
    <source>
        <dbReference type="Proteomes" id="UP000001940"/>
    </source>
</evidence>
<evidence type="ECO:0000312" key="7">
    <source>
        <dbReference type="WormBase" id="C27D6.4a"/>
    </source>
</evidence>
<evidence type="ECO:0000312" key="8">
    <source>
        <dbReference type="WormBase" id="C27D6.4b"/>
    </source>
</evidence>
<evidence type="ECO:0000312" key="9">
    <source>
        <dbReference type="WormBase" id="C27D6.4c"/>
    </source>
</evidence>
<evidence type="ECO:0000312" key="10">
    <source>
        <dbReference type="WormBase" id="C27D6.4d"/>
    </source>
</evidence>
<comment type="function">
    <text evidence="1 4">Transcription factor (By similarity). Plays a role in regulating the developmentally arrested larval state known as dauer, when induced by long-term exposure to the Gram-negative bacterium P.aeruginosa PAO1, but dispensable for dauer formation induced by starvation (PubMed:32963007). Involved in regulating expression of microRNA mir-243, during long-term exposure to P.aeruginosa PAO1 (PubMed:32963007).</text>
</comment>
<comment type="subcellular location">
    <subcellularLocation>
        <location evidence="2">Nucleus</location>
    </subcellularLocation>
</comment>
<comment type="alternative products">
    <event type="alternative splicing"/>
    <isoform>
        <id>Q4JFH9-1</id>
        <name evidence="9">c</name>
        <sequence type="displayed"/>
    </isoform>
    <isoform>
        <id>Q4JFH9-2</id>
        <name evidence="7">a</name>
        <sequence type="described" ref="VSP_061111"/>
    </isoform>
    <isoform>
        <id>Q4JFH9-3</id>
        <name evidence="8">b</name>
        <sequence type="described" ref="VSP_061113"/>
    </isoform>
    <isoform>
        <id>Q4JFH9-4</id>
        <name evidence="10">d</name>
        <sequence type="described" ref="VSP_061112"/>
    </isoform>
</comment>
<comment type="induction">
    <text evidence="4">Expression up-regulated in animals exposed to the Gram-negative bacterium P.aeruginosa PAO1 for two generations.</text>
</comment>
<comment type="similarity">
    <text evidence="5">Belongs to the bZIP family.</text>
</comment>
<protein>
    <recommendedName>
        <fullName evidence="5">CREB homolog crh-2</fullName>
    </recommendedName>
</protein>
<reference evidence="6" key="1">
    <citation type="journal article" date="1998" name="Science">
        <title>Genome sequence of the nematode C. elegans: a platform for investigating biology.</title>
        <authorList>
            <consortium name="The C. elegans sequencing consortium"/>
        </authorList>
    </citation>
    <scope>NUCLEOTIDE SEQUENCE [LARGE SCALE GENOMIC DNA]</scope>
    <source>
        <strain evidence="6">Bristol N2</strain>
    </source>
</reference>
<reference evidence="5" key="2">
    <citation type="journal article" date="2020" name="MBio">
        <title>Intergenerational Pathogen-Induced Diapause in Caenorhabditis elegans Is Modulated by mir-243.</title>
        <authorList>
            <person name="Gabaldon C."/>
            <person name="Leguee M."/>
            <person name="Palominos M.F."/>
            <person name="Verdugo L."/>
            <person name="Gutzwiller F."/>
            <person name="Calixto A."/>
        </authorList>
    </citation>
    <scope>FUNCTION</scope>
    <scope>INDUCTION BY PATHOGEN</scope>
</reference>
<proteinExistence type="evidence at transcript level"/>
<organism evidence="6">
    <name type="scientific">Caenorhabditis elegans</name>
    <dbReference type="NCBI Taxonomy" id="6239"/>
    <lineage>
        <taxon>Eukaryota</taxon>
        <taxon>Metazoa</taxon>
        <taxon>Ecdysozoa</taxon>
        <taxon>Nematoda</taxon>
        <taxon>Chromadorea</taxon>
        <taxon>Rhabditida</taxon>
        <taxon>Rhabditina</taxon>
        <taxon>Rhabditomorpha</taxon>
        <taxon>Rhabditoidea</taxon>
        <taxon>Rhabditidae</taxon>
        <taxon>Peloderinae</taxon>
        <taxon>Caenorhabditis</taxon>
    </lineage>
</organism>
<accession>Q4JFH9</accession>
<accession>Q09636</accession>
<accession>Q4JFI0</accession>
<accession>Q95ZX9</accession>
<accession>S6FD32</accession>
<gene>
    <name evidence="9" type="primary">crh-2</name>
    <name evidence="9" type="ORF">C27D6.4</name>
</gene>
<keyword id="KW-0025">Alternative splicing</keyword>
<keyword id="KW-0238">DNA-binding</keyword>
<keyword id="KW-0539">Nucleus</keyword>
<keyword id="KW-1185">Reference proteome</keyword>
<keyword id="KW-0804">Transcription</keyword>
<keyword id="KW-0805">Transcription regulation</keyword>
<dbReference type="EMBL" id="BX284602">
    <property type="protein sequence ID" value="CCD65811.1"/>
    <property type="molecule type" value="Genomic_DNA"/>
</dbReference>
<dbReference type="EMBL" id="BX284602">
    <property type="protein sequence ID" value="CCD65812.1"/>
    <property type="molecule type" value="Genomic_DNA"/>
</dbReference>
<dbReference type="EMBL" id="BX284602">
    <property type="protein sequence ID" value="CCD65813.3"/>
    <property type="molecule type" value="Genomic_DNA"/>
</dbReference>
<dbReference type="EMBL" id="BX284602">
    <property type="protein sequence ID" value="CDG24138.1"/>
    <property type="molecule type" value="Genomic_DNA"/>
</dbReference>
<dbReference type="PIR" id="T15656">
    <property type="entry name" value="T15656"/>
</dbReference>
<dbReference type="RefSeq" id="NP_001293486.1">
    <molecule id="Q4JFH9-4"/>
    <property type="nucleotide sequence ID" value="NM_001306557.3"/>
</dbReference>
<dbReference type="RefSeq" id="NP_740985.2">
    <molecule id="Q4JFH9-2"/>
    <property type="nucleotide sequence ID" value="NM_170987.5"/>
</dbReference>
<dbReference type="RefSeq" id="NP_740986.2">
    <molecule id="Q4JFH9-3"/>
    <property type="nucleotide sequence ID" value="NM_170988.4"/>
</dbReference>
<dbReference type="RefSeq" id="NP_740987.4">
    <molecule id="Q4JFH9-1"/>
    <property type="nucleotide sequence ID" value="NM_170989.9"/>
</dbReference>
<dbReference type="SMR" id="Q4JFH9"/>
<dbReference type="FunCoup" id="Q4JFH9">
    <property type="interactions" value="61"/>
</dbReference>
<dbReference type="IntAct" id="Q4JFH9">
    <property type="interactions" value="1"/>
</dbReference>
<dbReference type="STRING" id="6239.C27D6.4c.1"/>
<dbReference type="PaxDb" id="6239-C27D6.4c"/>
<dbReference type="EnsemblMetazoa" id="C27D6.4a.1">
    <molecule id="Q4JFH9-2"/>
    <property type="protein sequence ID" value="C27D6.4a.1"/>
    <property type="gene ID" value="WBGene00016162"/>
</dbReference>
<dbReference type="EnsemblMetazoa" id="C27D6.4b.1">
    <molecule id="Q4JFH9-3"/>
    <property type="protein sequence ID" value="C27D6.4b.1"/>
    <property type="gene ID" value="WBGene00016162"/>
</dbReference>
<dbReference type="EnsemblMetazoa" id="C27D6.4c.1">
    <molecule id="Q4JFH9-1"/>
    <property type="protein sequence ID" value="C27D6.4c.1"/>
    <property type="gene ID" value="WBGene00016162"/>
</dbReference>
<dbReference type="EnsemblMetazoa" id="C27D6.4d.1">
    <molecule id="Q4JFH9-4"/>
    <property type="protein sequence ID" value="C27D6.4d.1"/>
    <property type="gene ID" value="WBGene00016162"/>
</dbReference>
<dbReference type="GeneID" id="259434"/>
<dbReference type="KEGG" id="cel:CELE_C27D6.4"/>
<dbReference type="UCSC" id="C27D6.4c">
    <property type="organism name" value="c. elegans"/>
</dbReference>
<dbReference type="AGR" id="WB:WBGene00016162"/>
<dbReference type="CTD" id="259434"/>
<dbReference type="WormBase" id="C27D6.4a">
    <molecule id="Q4JFH9-2"/>
    <property type="protein sequence ID" value="CE32146"/>
    <property type="gene ID" value="WBGene00016162"/>
    <property type="gene designation" value="crh-2"/>
</dbReference>
<dbReference type="WormBase" id="C27D6.4b">
    <molecule id="Q4JFH9-3"/>
    <property type="protein sequence ID" value="CE32147"/>
    <property type="gene ID" value="WBGene00016162"/>
    <property type="gene designation" value="crh-2"/>
</dbReference>
<dbReference type="WormBase" id="C27D6.4c">
    <molecule id="Q4JFH9-1"/>
    <property type="protein sequence ID" value="CE48424"/>
    <property type="gene ID" value="WBGene00016162"/>
    <property type="gene designation" value="crh-2"/>
</dbReference>
<dbReference type="WormBase" id="C27D6.4d">
    <molecule id="Q4JFH9-4"/>
    <property type="protein sequence ID" value="CE48416"/>
    <property type="gene ID" value="WBGene00016162"/>
    <property type="gene designation" value="crh-2"/>
</dbReference>
<dbReference type="eggNOG" id="KOG0709">
    <property type="taxonomic scope" value="Eukaryota"/>
</dbReference>
<dbReference type="GeneTree" id="ENSGT00940000168374"/>
<dbReference type="HOGENOM" id="CLU_076181_0_0_1"/>
<dbReference type="InParanoid" id="Q4JFH9"/>
<dbReference type="OMA" id="HNFLFKD"/>
<dbReference type="OrthoDB" id="674948at2759"/>
<dbReference type="PRO" id="PR:Q4JFH9"/>
<dbReference type="Proteomes" id="UP000001940">
    <property type="component" value="Chromosome II"/>
</dbReference>
<dbReference type="Bgee" id="WBGene00016162">
    <property type="expression patterns" value="Expressed in larva and 4 other cell types or tissues"/>
</dbReference>
<dbReference type="ExpressionAtlas" id="Q4JFH9">
    <property type="expression patterns" value="baseline and differential"/>
</dbReference>
<dbReference type="GO" id="GO:0005634">
    <property type="term" value="C:nucleus"/>
    <property type="evidence" value="ECO:0007669"/>
    <property type="project" value="UniProtKB-SubCell"/>
</dbReference>
<dbReference type="GO" id="GO:0035497">
    <property type="term" value="F:cAMP response element binding"/>
    <property type="evidence" value="ECO:0000318"/>
    <property type="project" value="GO_Central"/>
</dbReference>
<dbReference type="GO" id="GO:0000981">
    <property type="term" value="F:DNA-binding transcription factor activity, RNA polymerase II-specific"/>
    <property type="evidence" value="ECO:0000318"/>
    <property type="project" value="GO_Central"/>
</dbReference>
<dbReference type="GO" id="GO:0050829">
    <property type="term" value="P:defense response to Gram-negative bacterium"/>
    <property type="evidence" value="ECO:0000315"/>
    <property type="project" value="UniProtKB"/>
</dbReference>
<dbReference type="GO" id="GO:1905911">
    <property type="term" value="P:positive regulation of dauer entry"/>
    <property type="evidence" value="ECO:0000315"/>
    <property type="project" value="UniProtKB"/>
</dbReference>
<dbReference type="GO" id="GO:0010468">
    <property type="term" value="P:regulation of gene expression"/>
    <property type="evidence" value="ECO:0000315"/>
    <property type="project" value="UniProtKB"/>
</dbReference>
<dbReference type="GO" id="GO:0006357">
    <property type="term" value="P:regulation of transcription by RNA polymerase II"/>
    <property type="evidence" value="ECO:0000318"/>
    <property type="project" value="GO_Central"/>
</dbReference>
<dbReference type="CDD" id="cd14689">
    <property type="entry name" value="bZIP_CREB3"/>
    <property type="match status" value="1"/>
</dbReference>
<dbReference type="FunFam" id="1.20.5.170:FF:000120">
    <property type="entry name" value="CREB Homolog"/>
    <property type="match status" value="1"/>
</dbReference>
<dbReference type="Gene3D" id="1.20.5.170">
    <property type="match status" value="1"/>
</dbReference>
<dbReference type="InterPro" id="IPR004827">
    <property type="entry name" value="bZIP"/>
</dbReference>
<dbReference type="InterPro" id="IPR046347">
    <property type="entry name" value="bZIP_sf"/>
</dbReference>
<dbReference type="PANTHER" id="PTHR46004">
    <property type="entry name" value="CYCLIC AMP RESPONSE ELEMENT-BINDING PROTEIN A"/>
    <property type="match status" value="1"/>
</dbReference>
<dbReference type="PANTHER" id="PTHR46004:SF3">
    <property type="entry name" value="CYCLIC AMP RESPONSE ELEMENT-BINDING PROTEIN A"/>
    <property type="match status" value="1"/>
</dbReference>
<dbReference type="Pfam" id="PF00170">
    <property type="entry name" value="bZIP_1"/>
    <property type="match status" value="1"/>
</dbReference>
<dbReference type="SMART" id="SM00338">
    <property type="entry name" value="BRLZ"/>
    <property type="match status" value="1"/>
</dbReference>
<dbReference type="SUPFAM" id="SSF57959">
    <property type="entry name" value="Leucine zipper domain"/>
    <property type="match status" value="1"/>
</dbReference>
<dbReference type="PROSITE" id="PS50217">
    <property type="entry name" value="BZIP"/>
    <property type="match status" value="1"/>
</dbReference>
<dbReference type="PROSITE" id="PS00036">
    <property type="entry name" value="BZIP_BASIC"/>
    <property type="match status" value="1"/>
</dbReference>
<feature type="chain" id="PRO_0000453179" description="CREB homolog crh-2">
    <location>
        <begin position="1"/>
        <end position="351"/>
    </location>
</feature>
<feature type="domain" description="bZIP" evidence="2">
    <location>
        <begin position="282"/>
        <end position="345"/>
    </location>
</feature>
<feature type="region of interest" description="Disordered" evidence="3">
    <location>
        <begin position="46"/>
        <end position="104"/>
    </location>
</feature>
<feature type="region of interest" description="Disordered" evidence="3">
    <location>
        <begin position="119"/>
        <end position="149"/>
    </location>
</feature>
<feature type="region of interest" description="Basic motif" evidence="2">
    <location>
        <begin position="284"/>
        <end position="304"/>
    </location>
</feature>
<feature type="region of interest" description="Leucine-zipper" evidence="2">
    <location>
        <begin position="307"/>
        <end position="314"/>
    </location>
</feature>
<feature type="compositionally biased region" description="Low complexity" evidence="3">
    <location>
        <begin position="82"/>
        <end position="95"/>
    </location>
</feature>
<feature type="splice variant" id="VSP_061111" description="In isoform a." evidence="5">
    <original>MNSSSSRSSMSMPMPMDMPQMHMGMNNNCEMNQMMHPIPNFPMKWEPCTPPDEKPHPSMLFPPLSGIFNQSRHSSTGEDYHGSSSGSPSSSLSSPNEFKDEPLGLDVHFGNSLFNAPFSPSATSSHSPSSYGMMHGSHSMASHQLHQQQLSPLPSVAHFSHSHHLQHHVVQHPSQASLQMNMNQIFSGPSHQYASSSVPHTFLFKDSTIYEGMG</original>
    <variation>MATRCTANVFIKDEIKEEQLEDHGIEMDLSALLNSRAGTNSHDSSPDEEEHDMTIHSEMFLAAASADGLDGSEGSQEVMDVDDLLLR</variation>
    <location>
        <begin position="1"/>
        <end position="214"/>
    </location>
</feature>
<feature type="splice variant" id="VSP_061112" description="In isoform d." evidence="5">
    <location>
        <begin position="1"/>
        <end position="132"/>
    </location>
</feature>
<feature type="splice variant" id="VSP_061113" description="In isoform b." evidence="5">
    <original>MNSSSSRSSMSMPMPMDMPQMHMGMNNNCEMNQMMHPIPNFPMKWEPCTPPDEKPHPSMLFPPLSGIFNQSRHSSTGE</original>
    <variation>MDDDWATSGVLEKDVFISSVHDEKDTLDILKLFDNDIDGFSDDNFRIKMEPNDETS</variation>
    <location>
        <begin position="1"/>
        <end position="78"/>
    </location>
</feature>
<sequence length="351" mass="39570">MNSSSSRSSMSMPMPMDMPQMHMGMNNNCEMNQMMHPIPNFPMKWEPCTPPDEKPHPSMLFPPLSGIFNQSRHSSTGEDYHGSSSGSPSSSLSSPNEFKDEPLGLDVHFGNSLFNAPFSPSATSSHSPSSYGMMHGSHSMASHQLHQQQLSPLPSVAHFSHSHHLQHHVVQHPSQASLQMNMNQIFSGPSHQYASSSVPHTFLFKDSTIYEGMGGMGLAAAQQQLKARNKMHEMAIRQHLITDQNITANGDLVLSAEERRTLVQEGYSIPQKYPLTKSEEESLKIVRRKIKNKLSAQESRRKRKEYIDALEGRLHCFSEENKSLKKQVHQLEASNRDLQQKLHQYESKEKM</sequence>